<feature type="initiator methionine" description="Removed" evidence="3">
    <location>
        <position position="1"/>
    </location>
</feature>
<feature type="chain" id="PRO_0000286352" description="Protein lin-7 homolog C">
    <location>
        <begin position="2"/>
        <end position="197"/>
    </location>
</feature>
<feature type="domain" description="L27" evidence="5">
    <location>
        <begin position="10"/>
        <end position="65"/>
    </location>
</feature>
<feature type="domain" description="PDZ" evidence="4">
    <location>
        <begin position="93"/>
        <end position="175"/>
    </location>
</feature>
<feature type="short sequence motif" description="Kinase interacting site" evidence="1">
    <location>
        <begin position="2"/>
        <end position="13"/>
    </location>
</feature>
<feature type="modified residue" description="N-acetylalanine" evidence="3">
    <location>
        <position position="2"/>
    </location>
</feature>
<comment type="function">
    <text evidence="1 2">Plays a role in establishing and maintaining the asymmetric distribution of channels and receptors at the plasma membrane of polarized cells. Forms membrane-associated multiprotein complexes that may regulate delivery and recycling of proteins to the correct membrane domains. The tripartite complex composed of LIN7 (LIN7A, LIN7B or LIN7C), CASK and APBA1 associates with the motor protein KIF17 to transport vesicles containing N-methyl-D-aspartate (NMDA) receptor subunit NR2B along microtubules (By similarity). This complex may have the potential to couple synaptic vesicle exocytosis to cell adhesion in brain. Ensures the proper localization of GRIN2B (subunit 2B of the NMDA receptor) to neuronal postsynaptic density and may function in localizing synaptic vesicles at synapses where it is recruited by beta-catenin and cadherin. Required to localize Kir2 channels, GABA transporter (SLC6A12) and EGFR/ERBB1, ERBB2, ERBB3 and ERBB4 to the basolateral membrane of epithelial cells (By similarity).</text>
</comment>
<comment type="subunit">
    <text evidence="1 2">Forms a complex with CASK and APBA1 or CASKIN1. Component of the brain-specific heterotrimeric complex (LIN-10-LIN-2-LIN-7 complex) composed of at least APBA1, CASK, and LIN7, which associates with the motor protein KIF17 to transport vesicles along microtubules (By similarity). Can also interact with other modular proteins containing protein-protein interaction domains like PALS1, PALS2, MPP7, DLG1, DLG2 and DLG3 through its L27 domain. Interacts with DLG4 and GRIN2B as well as CDH1 and CTNNB1, the channels KCNJ12/Kir2.2, KCNJ4/Kir2.3 and probably KCNJ2/Kir2.1 and SLC6A12/BGT-1 via its PDZ domain. The association of LIN7A with cadherin and beta-catenin is calcium-dependent, occurs at synaptic junctions and requires the actin cytoskeleton. Interacts with EGFR, ERBB2, ERBB3 and ERBB4 with both PDZ and KID domains. Associates with KIF17 via APBA1. Interacts with HTR4. Forms a tripartite complex composed of DLG1, MPP7 and LIN7 (LIN7A or LIN7C) (By similarity). Interacts with MAPK12 (By similarity).</text>
</comment>
<comment type="subcellular location">
    <subcellularLocation>
        <location evidence="1">Cell membrane</location>
        <topology evidence="1">Peripheral membrane protein</topology>
    </subcellularLocation>
    <subcellularLocation>
        <location evidence="1">Basolateral cell membrane</location>
        <topology evidence="1">Peripheral membrane protein</topology>
    </subcellularLocation>
    <subcellularLocation>
        <location evidence="1">Cell junction</location>
    </subcellularLocation>
    <subcellularLocation>
        <location evidence="1">Postsynaptic density membrane</location>
        <topology evidence="1">Peripheral membrane protein</topology>
    </subcellularLocation>
    <subcellularLocation>
        <location evidence="1">Cell junction</location>
        <location evidence="1">Tight junction</location>
    </subcellularLocation>
    <subcellularLocation>
        <location evidence="1">Synapse</location>
        <location evidence="1">Synaptosome</location>
    </subcellularLocation>
    <text evidence="1">Mainly basolateral in renal epithelial cells.</text>
</comment>
<comment type="domain">
    <text evidence="1">The L27 domain mediates interaction with CASK and is involved in the formation of multimeric complexes and the association of LIN7 to membranes.</text>
</comment>
<comment type="domain">
    <text evidence="1">The PDZ domain regulates endocytosis and recycling of the receptor at the membrane.</text>
</comment>
<comment type="domain">
    <text evidence="1">The kinase interacting site is required for proper delivery of ERBB2 to the basolateral membrane.</text>
</comment>
<comment type="similarity">
    <text evidence="6">Belongs to the lin-7 family.</text>
</comment>
<organism>
    <name type="scientific">Bos taurus</name>
    <name type="common">Bovine</name>
    <dbReference type="NCBI Taxonomy" id="9913"/>
    <lineage>
        <taxon>Eukaryota</taxon>
        <taxon>Metazoa</taxon>
        <taxon>Chordata</taxon>
        <taxon>Craniata</taxon>
        <taxon>Vertebrata</taxon>
        <taxon>Euteleostomi</taxon>
        <taxon>Mammalia</taxon>
        <taxon>Eutheria</taxon>
        <taxon>Laurasiatheria</taxon>
        <taxon>Artiodactyla</taxon>
        <taxon>Ruminantia</taxon>
        <taxon>Pecora</taxon>
        <taxon>Bovidae</taxon>
        <taxon>Bovinae</taxon>
        <taxon>Bos</taxon>
    </lineage>
</organism>
<gene>
    <name type="primary">LIN7C</name>
</gene>
<dbReference type="EMBL" id="BC120124">
    <property type="protein sequence ID" value="AAI20125.1"/>
    <property type="molecule type" value="mRNA"/>
</dbReference>
<dbReference type="RefSeq" id="NP_001068899.1">
    <property type="nucleotide sequence ID" value="NM_001075431.2"/>
</dbReference>
<dbReference type="SMR" id="Q0P5F3"/>
<dbReference type="FunCoup" id="Q0P5F3">
    <property type="interactions" value="2614"/>
</dbReference>
<dbReference type="STRING" id="9913.ENSBTAP00000001914"/>
<dbReference type="PaxDb" id="9913-ENSBTAP00000001914"/>
<dbReference type="GeneID" id="510125"/>
<dbReference type="KEGG" id="bta:510125"/>
<dbReference type="CTD" id="55327"/>
<dbReference type="eggNOG" id="KOG3550">
    <property type="taxonomic scope" value="Eukaryota"/>
</dbReference>
<dbReference type="HOGENOM" id="CLU_097962_0_0_1"/>
<dbReference type="InParanoid" id="Q0P5F3"/>
<dbReference type="OrthoDB" id="10056216at2759"/>
<dbReference type="TreeFam" id="TF316850"/>
<dbReference type="Proteomes" id="UP000009136">
    <property type="component" value="Unplaced"/>
</dbReference>
<dbReference type="GO" id="GO:0016323">
    <property type="term" value="C:basolateral plasma membrane"/>
    <property type="evidence" value="ECO:0000318"/>
    <property type="project" value="GO_Central"/>
</dbReference>
<dbReference type="GO" id="GO:0005923">
    <property type="term" value="C:bicellular tight junction"/>
    <property type="evidence" value="ECO:0007669"/>
    <property type="project" value="UniProtKB-SubCell"/>
</dbReference>
<dbReference type="GO" id="GO:0005911">
    <property type="term" value="C:cell-cell junction"/>
    <property type="evidence" value="ECO:0000318"/>
    <property type="project" value="GO_Central"/>
</dbReference>
<dbReference type="GO" id="GO:0097025">
    <property type="term" value="C:MPP7-DLG1-LIN7 complex"/>
    <property type="evidence" value="ECO:0000318"/>
    <property type="project" value="GO_Central"/>
</dbReference>
<dbReference type="GO" id="GO:0043005">
    <property type="term" value="C:neuron projection"/>
    <property type="evidence" value="ECO:0007669"/>
    <property type="project" value="UniProtKB-KW"/>
</dbReference>
<dbReference type="GO" id="GO:0098839">
    <property type="term" value="C:postsynaptic density membrane"/>
    <property type="evidence" value="ECO:0007669"/>
    <property type="project" value="UniProtKB-SubCell"/>
</dbReference>
<dbReference type="GO" id="GO:0098793">
    <property type="term" value="C:presynapse"/>
    <property type="evidence" value="ECO:0007669"/>
    <property type="project" value="GOC"/>
</dbReference>
<dbReference type="GO" id="GO:0045202">
    <property type="term" value="C:synapse"/>
    <property type="evidence" value="ECO:0000318"/>
    <property type="project" value="GO_Central"/>
</dbReference>
<dbReference type="GO" id="GO:0030674">
    <property type="term" value="F:protein-macromolecule adaptor activity"/>
    <property type="evidence" value="ECO:0000318"/>
    <property type="project" value="GO_Central"/>
</dbReference>
<dbReference type="GO" id="GO:0006887">
    <property type="term" value="P:exocytosis"/>
    <property type="evidence" value="ECO:0007669"/>
    <property type="project" value="UniProtKB-KW"/>
</dbReference>
<dbReference type="GO" id="GO:0007269">
    <property type="term" value="P:neurotransmitter secretion"/>
    <property type="evidence" value="ECO:0000318"/>
    <property type="project" value="GO_Central"/>
</dbReference>
<dbReference type="GO" id="GO:0015031">
    <property type="term" value="P:protein transport"/>
    <property type="evidence" value="ECO:0007669"/>
    <property type="project" value="UniProtKB-KW"/>
</dbReference>
<dbReference type="GO" id="GO:0008582">
    <property type="term" value="P:regulation of synaptic assembly at neuromuscular junction"/>
    <property type="evidence" value="ECO:0000318"/>
    <property type="project" value="GO_Central"/>
</dbReference>
<dbReference type="GO" id="GO:0048489">
    <property type="term" value="P:synaptic vesicle transport"/>
    <property type="evidence" value="ECO:0000318"/>
    <property type="project" value="GO_Central"/>
</dbReference>
<dbReference type="CDD" id="cd06796">
    <property type="entry name" value="PDZ_Lin-7-like"/>
    <property type="match status" value="1"/>
</dbReference>
<dbReference type="FunFam" id="2.30.42.10:FF:000076">
    <property type="entry name" value="Protein lin-7 homolog"/>
    <property type="match status" value="1"/>
</dbReference>
<dbReference type="Gene3D" id="2.30.42.10">
    <property type="match status" value="1"/>
</dbReference>
<dbReference type="Gene3D" id="1.10.287.650">
    <property type="entry name" value="L27 domain"/>
    <property type="match status" value="1"/>
</dbReference>
<dbReference type="InterPro" id="IPR014775">
    <property type="entry name" value="L27_C"/>
</dbReference>
<dbReference type="InterPro" id="IPR004172">
    <property type="entry name" value="L27_dom"/>
</dbReference>
<dbReference type="InterPro" id="IPR036892">
    <property type="entry name" value="L27_dom_sf"/>
</dbReference>
<dbReference type="InterPro" id="IPR017365">
    <property type="entry name" value="LIN7"/>
</dbReference>
<dbReference type="InterPro" id="IPR051109">
    <property type="entry name" value="MAM_complex_regulator"/>
</dbReference>
<dbReference type="InterPro" id="IPR001478">
    <property type="entry name" value="PDZ"/>
</dbReference>
<dbReference type="InterPro" id="IPR036034">
    <property type="entry name" value="PDZ_sf"/>
</dbReference>
<dbReference type="PANTHER" id="PTHR14063">
    <property type="entry name" value="PROTEIN LIN-7 HOMOLOG"/>
    <property type="match status" value="1"/>
</dbReference>
<dbReference type="Pfam" id="PF02828">
    <property type="entry name" value="L27"/>
    <property type="match status" value="1"/>
</dbReference>
<dbReference type="Pfam" id="PF00595">
    <property type="entry name" value="PDZ"/>
    <property type="match status" value="1"/>
</dbReference>
<dbReference type="PIRSF" id="PIRSF038039">
    <property type="entry name" value="Lin-7_homologue"/>
    <property type="match status" value="1"/>
</dbReference>
<dbReference type="SMART" id="SM00569">
    <property type="entry name" value="L27"/>
    <property type="match status" value="1"/>
</dbReference>
<dbReference type="SMART" id="SM00228">
    <property type="entry name" value="PDZ"/>
    <property type="match status" value="1"/>
</dbReference>
<dbReference type="SUPFAM" id="SSF101288">
    <property type="entry name" value="L27 domain"/>
    <property type="match status" value="1"/>
</dbReference>
<dbReference type="SUPFAM" id="SSF50156">
    <property type="entry name" value="PDZ domain-like"/>
    <property type="match status" value="1"/>
</dbReference>
<dbReference type="PROSITE" id="PS51022">
    <property type="entry name" value="L27"/>
    <property type="match status" value="1"/>
</dbReference>
<dbReference type="PROSITE" id="PS50106">
    <property type="entry name" value="PDZ"/>
    <property type="match status" value="1"/>
</dbReference>
<name>LIN7C_BOVIN</name>
<evidence type="ECO:0000250" key="1"/>
<evidence type="ECO:0000250" key="2">
    <source>
        <dbReference type="UniProtKB" id="O88952"/>
    </source>
</evidence>
<evidence type="ECO:0000250" key="3">
    <source>
        <dbReference type="UniProtKB" id="Q9NUP9"/>
    </source>
</evidence>
<evidence type="ECO:0000255" key="4">
    <source>
        <dbReference type="PROSITE-ProRule" id="PRU00143"/>
    </source>
</evidence>
<evidence type="ECO:0000255" key="5">
    <source>
        <dbReference type="PROSITE-ProRule" id="PRU00365"/>
    </source>
</evidence>
<evidence type="ECO:0000305" key="6"/>
<proteinExistence type="evidence at transcript level"/>
<reference key="1">
    <citation type="submission" date="2006-08" db="EMBL/GenBank/DDBJ databases">
        <authorList>
            <consortium name="NIH - Mammalian Gene Collection (MGC) project"/>
        </authorList>
    </citation>
    <scope>NUCLEOTIDE SEQUENCE [LARGE SCALE MRNA]</scope>
    <source>
        <strain>Hereford</strain>
        <tissue>Fetal cerebellum</tissue>
    </source>
</reference>
<accession>Q0P5F3</accession>
<sequence length="197" mass="21834">MAALGEPVRLERDICRAIELLEKLQRSGEVPPQKLQALQRVLQSEFCNAVREVYEHVYETVDISSSPEVRANATAKATVAAFAASEGHSHPRVVELPKTEEGLGFNIMGGKEQNSPIYISRIIPGGIADRHGGLKRGDQLLSVNGVSVEGEHHEKAVELLKAAQGKVKLVVRYTPKVLEEMESRFEKMRSAKRRQQT</sequence>
<protein>
    <recommendedName>
        <fullName>Protein lin-7 homolog C</fullName>
        <shortName>Lin-7C</shortName>
    </recommendedName>
</protein>
<keyword id="KW-0007">Acetylation</keyword>
<keyword id="KW-0965">Cell junction</keyword>
<keyword id="KW-1003">Cell membrane</keyword>
<keyword id="KW-0268">Exocytosis</keyword>
<keyword id="KW-0472">Membrane</keyword>
<keyword id="KW-0628">Postsynaptic cell membrane</keyword>
<keyword id="KW-0653">Protein transport</keyword>
<keyword id="KW-1185">Reference proteome</keyword>
<keyword id="KW-0770">Synapse</keyword>
<keyword id="KW-0771">Synaptosome</keyword>
<keyword id="KW-0796">Tight junction</keyword>
<keyword id="KW-0813">Transport</keyword>